<evidence type="ECO:0000255" key="1">
    <source>
        <dbReference type="HAMAP-Rule" id="MF_00480"/>
    </source>
</evidence>
<evidence type="ECO:0000305" key="2"/>
<accession>A6LPQ7</accession>
<organism>
    <name type="scientific">Clostridium beijerinckii (strain ATCC 51743 / NCIMB 8052)</name>
    <name type="common">Clostridium acetobutylicum</name>
    <dbReference type="NCBI Taxonomy" id="290402"/>
    <lineage>
        <taxon>Bacteria</taxon>
        <taxon>Bacillati</taxon>
        <taxon>Bacillota</taxon>
        <taxon>Clostridia</taxon>
        <taxon>Eubacteriales</taxon>
        <taxon>Clostridiaceae</taxon>
        <taxon>Clostridium</taxon>
    </lineage>
</organism>
<sequence>MPRKGHIAKRDVLPDPVYNSKVVTKFINSIMEDGKKGVAQKICYEAFGLIAKRSGKEALEVFEEAMNNVMPLLEVKARRIGGATYQVPIEVRPERRQTLGIRWMLIAARKRGEKLMSERVAGELLDASNNTGAAVKKREDTHKMAEANKAFAHYRY</sequence>
<keyword id="KW-0687">Ribonucleoprotein</keyword>
<keyword id="KW-0689">Ribosomal protein</keyword>
<keyword id="KW-0694">RNA-binding</keyword>
<keyword id="KW-0699">rRNA-binding</keyword>
<keyword id="KW-0820">tRNA-binding</keyword>
<reference key="1">
    <citation type="submission" date="2007-06" db="EMBL/GenBank/DDBJ databases">
        <title>Complete sequence of Clostridium beijerinckii NCIMB 8052.</title>
        <authorList>
            <consortium name="US DOE Joint Genome Institute"/>
            <person name="Copeland A."/>
            <person name="Lucas S."/>
            <person name="Lapidus A."/>
            <person name="Barry K."/>
            <person name="Detter J.C."/>
            <person name="Glavina del Rio T."/>
            <person name="Hammon N."/>
            <person name="Israni S."/>
            <person name="Dalin E."/>
            <person name="Tice H."/>
            <person name="Pitluck S."/>
            <person name="Sims D."/>
            <person name="Brettin T."/>
            <person name="Bruce D."/>
            <person name="Tapia R."/>
            <person name="Brainard J."/>
            <person name="Schmutz J."/>
            <person name="Larimer F."/>
            <person name="Land M."/>
            <person name="Hauser L."/>
            <person name="Kyrpides N."/>
            <person name="Mikhailova N."/>
            <person name="Bennet G."/>
            <person name="Cann I."/>
            <person name="Chen J.-S."/>
            <person name="Contreras A.L."/>
            <person name="Jones D."/>
            <person name="Kashket E."/>
            <person name="Mitchell W."/>
            <person name="Stoddard S."/>
            <person name="Schwarz W."/>
            <person name="Qureshi N."/>
            <person name="Young M."/>
            <person name="Shi Z."/>
            <person name="Ezeji T."/>
            <person name="White B."/>
            <person name="Blaschek H."/>
            <person name="Richardson P."/>
        </authorList>
    </citation>
    <scope>NUCLEOTIDE SEQUENCE [LARGE SCALE GENOMIC DNA]</scope>
    <source>
        <strain>ATCC 51743 / NCIMB 8052</strain>
    </source>
</reference>
<dbReference type="EMBL" id="CP000721">
    <property type="protein sequence ID" value="ABR32337.1"/>
    <property type="molecule type" value="Genomic_DNA"/>
</dbReference>
<dbReference type="RefSeq" id="WP_011967509.1">
    <property type="nucleotide sequence ID" value="NC_009617.1"/>
</dbReference>
<dbReference type="SMR" id="A6LPQ7"/>
<dbReference type="KEGG" id="cbe:Cbei_0147"/>
<dbReference type="eggNOG" id="COG0049">
    <property type="taxonomic scope" value="Bacteria"/>
</dbReference>
<dbReference type="HOGENOM" id="CLU_072226_1_1_9"/>
<dbReference type="Proteomes" id="UP000000565">
    <property type="component" value="Chromosome"/>
</dbReference>
<dbReference type="GO" id="GO:0015935">
    <property type="term" value="C:small ribosomal subunit"/>
    <property type="evidence" value="ECO:0007669"/>
    <property type="project" value="InterPro"/>
</dbReference>
<dbReference type="GO" id="GO:0019843">
    <property type="term" value="F:rRNA binding"/>
    <property type="evidence" value="ECO:0007669"/>
    <property type="project" value="UniProtKB-UniRule"/>
</dbReference>
<dbReference type="GO" id="GO:0003735">
    <property type="term" value="F:structural constituent of ribosome"/>
    <property type="evidence" value="ECO:0007669"/>
    <property type="project" value="InterPro"/>
</dbReference>
<dbReference type="GO" id="GO:0000049">
    <property type="term" value="F:tRNA binding"/>
    <property type="evidence" value="ECO:0007669"/>
    <property type="project" value="UniProtKB-UniRule"/>
</dbReference>
<dbReference type="GO" id="GO:0006412">
    <property type="term" value="P:translation"/>
    <property type="evidence" value="ECO:0007669"/>
    <property type="project" value="UniProtKB-UniRule"/>
</dbReference>
<dbReference type="CDD" id="cd14869">
    <property type="entry name" value="uS7_Bacteria"/>
    <property type="match status" value="1"/>
</dbReference>
<dbReference type="FunFam" id="1.10.455.10:FF:000001">
    <property type="entry name" value="30S ribosomal protein S7"/>
    <property type="match status" value="1"/>
</dbReference>
<dbReference type="Gene3D" id="1.10.455.10">
    <property type="entry name" value="Ribosomal protein S7 domain"/>
    <property type="match status" value="1"/>
</dbReference>
<dbReference type="HAMAP" id="MF_00480_B">
    <property type="entry name" value="Ribosomal_uS7_B"/>
    <property type="match status" value="1"/>
</dbReference>
<dbReference type="InterPro" id="IPR000235">
    <property type="entry name" value="Ribosomal_uS7"/>
</dbReference>
<dbReference type="InterPro" id="IPR005717">
    <property type="entry name" value="Ribosomal_uS7_bac/org-type"/>
</dbReference>
<dbReference type="InterPro" id="IPR020606">
    <property type="entry name" value="Ribosomal_uS7_CS"/>
</dbReference>
<dbReference type="InterPro" id="IPR023798">
    <property type="entry name" value="Ribosomal_uS7_dom"/>
</dbReference>
<dbReference type="InterPro" id="IPR036823">
    <property type="entry name" value="Ribosomal_uS7_dom_sf"/>
</dbReference>
<dbReference type="NCBIfam" id="TIGR01029">
    <property type="entry name" value="rpsG_bact"/>
    <property type="match status" value="1"/>
</dbReference>
<dbReference type="PANTHER" id="PTHR11205">
    <property type="entry name" value="RIBOSOMAL PROTEIN S7"/>
    <property type="match status" value="1"/>
</dbReference>
<dbReference type="Pfam" id="PF00177">
    <property type="entry name" value="Ribosomal_S7"/>
    <property type="match status" value="1"/>
</dbReference>
<dbReference type="PIRSF" id="PIRSF002122">
    <property type="entry name" value="RPS7p_RPS7a_RPS5e_RPS7o"/>
    <property type="match status" value="1"/>
</dbReference>
<dbReference type="SUPFAM" id="SSF47973">
    <property type="entry name" value="Ribosomal protein S7"/>
    <property type="match status" value="1"/>
</dbReference>
<dbReference type="PROSITE" id="PS00052">
    <property type="entry name" value="RIBOSOMAL_S7"/>
    <property type="match status" value="1"/>
</dbReference>
<feature type="chain" id="PRO_1000081276" description="Small ribosomal subunit protein uS7">
    <location>
        <begin position="1"/>
        <end position="156"/>
    </location>
</feature>
<comment type="function">
    <text evidence="1">One of the primary rRNA binding proteins, it binds directly to 16S rRNA where it nucleates assembly of the head domain of the 30S subunit. Is located at the subunit interface close to the decoding center, probably blocks exit of the E-site tRNA.</text>
</comment>
<comment type="subunit">
    <text evidence="1">Part of the 30S ribosomal subunit. Contacts proteins S9 and S11.</text>
</comment>
<comment type="similarity">
    <text evidence="1">Belongs to the universal ribosomal protein uS7 family.</text>
</comment>
<name>RS7_CLOB8</name>
<proteinExistence type="inferred from homology"/>
<protein>
    <recommendedName>
        <fullName evidence="1">Small ribosomal subunit protein uS7</fullName>
    </recommendedName>
    <alternativeName>
        <fullName evidence="2">30S ribosomal protein S7</fullName>
    </alternativeName>
</protein>
<gene>
    <name evidence="1" type="primary">rpsG</name>
    <name type="ordered locus">Cbei_0147</name>
</gene>